<keyword id="KW-0963">Cytoplasm</keyword>
<keyword id="KW-0460">Magnesium</keyword>
<keyword id="KW-0479">Metal-binding</keyword>
<keyword id="KW-0566">Pantothenate biosynthesis</keyword>
<keyword id="KW-1185">Reference proteome</keyword>
<keyword id="KW-0808">Transferase</keyword>
<dbReference type="EC" id="2.1.2.11" evidence="1"/>
<dbReference type="EMBL" id="CP000159">
    <property type="protein sequence ID" value="ABC43936.1"/>
    <property type="molecule type" value="Genomic_DNA"/>
</dbReference>
<dbReference type="RefSeq" id="YP_445955.1">
    <property type="nucleotide sequence ID" value="NC_007677.1"/>
</dbReference>
<dbReference type="SMR" id="Q2S1H6"/>
<dbReference type="STRING" id="309807.SRU_1843"/>
<dbReference type="EnsemblBacteria" id="ABC43936">
    <property type="protein sequence ID" value="ABC43936"/>
    <property type="gene ID" value="SRU_1843"/>
</dbReference>
<dbReference type="KEGG" id="sru:SRU_1843"/>
<dbReference type="PATRIC" id="fig|309807.25.peg.1910"/>
<dbReference type="eggNOG" id="COG0413">
    <property type="taxonomic scope" value="Bacteria"/>
</dbReference>
<dbReference type="HOGENOM" id="CLU_036645_1_0_10"/>
<dbReference type="OrthoDB" id="9781789at2"/>
<dbReference type="UniPathway" id="UPA00028">
    <property type="reaction ID" value="UER00003"/>
</dbReference>
<dbReference type="Proteomes" id="UP000008674">
    <property type="component" value="Chromosome"/>
</dbReference>
<dbReference type="GO" id="GO:0005737">
    <property type="term" value="C:cytoplasm"/>
    <property type="evidence" value="ECO:0007669"/>
    <property type="project" value="UniProtKB-SubCell"/>
</dbReference>
<dbReference type="GO" id="GO:0003864">
    <property type="term" value="F:3-methyl-2-oxobutanoate hydroxymethyltransferase activity"/>
    <property type="evidence" value="ECO:0007669"/>
    <property type="project" value="UniProtKB-UniRule"/>
</dbReference>
<dbReference type="GO" id="GO:0000287">
    <property type="term" value="F:magnesium ion binding"/>
    <property type="evidence" value="ECO:0007669"/>
    <property type="project" value="TreeGrafter"/>
</dbReference>
<dbReference type="GO" id="GO:0015940">
    <property type="term" value="P:pantothenate biosynthetic process"/>
    <property type="evidence" value="ECO:0007669"/>
    <property type="project" value="UniProtKB-UniRule"/>
</dbReference>
<dbReference type="CDD" id="cd06557">
    <property type="entry name" value="KPHMT-like"/>
    <property type="match status" value="1"/>
</dbReference>
<dbReference type="FunFam" id="3.20.20.60:FF:000003">
    <property type="entry name" value="3-methyl-2-oxobutanoate hydroxymethyltransferase"/>
    <property type="match status" value="1"/>
</dbReference>
<dbReference type="Gene3D" id="3.20.20.60">
    <property type="entry name" value="Phosphoenolpyruvate-binding domains"/>
    <property type="match status" value="1"/>
</dbReference>
<dbReference type="HAMAP" id="MF_00156">
    <property type="entry name" value="PanB"/>
    <property type="match status" value="1"/>
</dbReference>
<dbReference type="InterPro" id="IPR003700">
    <property type="entry name" value="Pantoate_hydroxy_MeTrfase"/>
</dbReference>
<dbReference type="InterPro" id="IPR015813">
    <property type="entry name" value="Pyrv/PenolPyrv_kinase-like_dom"/>
</dbReference>
<dbReference type="InterPro" id="IPR040442">
    <property type="entry name" value="Pyrv_kinase-like_dom_sf"/>
</dbReference>
<dbReference type="NCBIfam" id="TIGR00222">
    <property type="entry name" value="panB"/>
    <property type="match status" value="1"/>
</dbReference>
<dbReference type="NCBIfam" id="NF001452">
    <property type="entry name" value="PRK00311.1"/>
    <property type="match status" value="1"/>
</dbReference>
<dbReference type="PANTHER" id="PTHR20881">
    <property type="entry name" value="3-METHYL-2-OXOBUTANOATE HYDROXYMETHYLTRANSFERASE"/>
    <property type="match status" value="1"/>
</dbReference>
<dbReference type="PANTHER" id="PTHR20881:SF0">
    <property type="entry name" value="3-METHYL-2-OXOBUTANOATE HYDROXYMETHYLTRANSFERASE"/>
    <property type="match status" value="1"/>
</dbReference>
<dbReference type="Pfam" id="PF02548">
    <property type="entry name" value="Pantoate_transf"/>
    <property type="match status" value="1"/>
</dbReference>
<dbReference type="PIRSF" id="PIRSF000388">
    <property type="entry name" value="Pantoate_hydroxy_MeTrfase"/>
    <property type="match status" value="1"/>
</dbReference>
<dbReference type="SUPFAM" id="SSF51621">
    <property type="entry name" value="Phosphoenolpyruvate/pyruvate domain"/>
    <property type="match status" value="1"/>
</dbReference>
<sequence>MPRVTTKTVQEMKEEGVPIAALTAYDYTSARLLDRAGADVLLVGDSAANVMAGHETTLPMTLDQMIYHAQCVVRGIDRSLVVVDLPFGAYQGDPTEALDSAIRVMKEAGAHAVKLEGGAPVVEAVERMVTAGIPVMGHLGLTPQSIYDYGTYQVRARDEEEADELRADAKRLEEAGCFAVVLEKIPAELAAEVTASLSIPTIGIGAGDQTDGQVLVSHDALGLSTDFEPRFVRRYARLDETIIDAIGAYVSDVRDRSFPDEDESY</sequence>
<comment type="function">
    <text evidence="1">Catalyzes the reversible reaction in which hydroxymethyl group from 5,10-methylenetetrahydrofolate is transferred onto alpha-ketoisovalerate to form ketopantoate.</text>
</comment>
<comment type="catalytic activity">
    <reaction evidence="1">
        <text>3-methyl-2-oxobutanoate + (6R)-5,10-methylene-5,6,7,8-tetrahydrofolate + H2O = 2-dehydropantoate + (6S)-5,6,7,8-tetrahydrofolate</text>
        <dbReference type="Rhea" id="RHEA:11824"/>
        <dbReference type="ChEBI" id="CHEBI:11561"/>
        <dbReference type="ChEBI" id="CHEBI:11851"/>
        <dbReference type="ChEBI" id="CHEBI:15377"/>
        <dbReference type="ChEBI" id="CHEBI:15636"/>
        <dbReference type="ChEBI" id="CHEBI:57453"/>
        <dbReference type="EC" id="2.1.2.11"/>
    </reaction>
</comment>
<comment type="cofactor">
    <cofactor evidence="1">
        <name>Mg(2+)</name>
        <dbReference type="ChEBI" id="CHEBI:18420"/>
    </cofactor>
    <text evidence="1">Binds 1 Mg(2+) ion per subunit.</text>
</comment>
<comment type="pathway">
    <text evidence="1">Cofactor biosynthesis; (R)-pantothenate biosynthesis; (R)-pantoate from 3-methyl-2-oxobutanoate: step 1/2.</text>
</comment>
<comment type="subunit">
    <text evidence="1">Homodecamer; pentamer of dimers.</text>
</comment>
<comment type="subcellular location">
    <subcellularLocation>
        <location evidence="1">Cytoplasm</location>
    </subcellularLocation>
</comment>
<comment type="similarity">
    <text evidence="1">Belongs to the PanB family.</text>
</comment>
<protein>
    <recommendedName>
        <fullName evidence="1">3-methyl-2-oxobutanoate hydroxymethyltransferase</fullName>
        <ecNumber evidence="1">2.1.2.11</ecNumber>
    </recommendedName>
    <alternativeName>
        <fullName evidence="1">Ketopantoate hydroxymethyltransferase</fullName>
        <shortName evidence="1">KPHMT</shortName>
    </alternativeName>
</protein>
<name>PANB_SALRD</name>
<gene>
    <name evidence="1" type="primary">panB</name>
    <name type="ordered locus">SRU_1843</name>
</gene>
<proteinExistence type="inferred from homology"/>
<feature type="chain" id="PRO_0000297364" description="3-methyl-2-oxobutanoate hydroxymethyltransferase">
    <location>
        <begin position="1"/>
        <end position="265"/>
    </location>
</feature>
<feature type="active site" description="Proton acceptor" evidence="1">
    <location>
        <position position="183"/>
    </location>
</feature>
<feature type="binding site" evidence="1">
    <location>
        <begin position="45"/>
        <end position="46"/>
    </location>
    <ligand>
        <name>3-methyl-2-oxobutanoate</name>
        <dbReference type="ChEBI" id="CHEBI:11851"/>
    </ligand>
</feature>
<feature type="binding site" evidence="1">
    <location>
        <position position="45"/>
    </location>
    <ligand>
        <name>Mg(2+)</name>
        <dbReference type="ChEBI" id="CHEBI:18420"/>
    </ligand>
</feature>
<feature type="binding site" evidence="1">
    <location>
        <position position="84"/>
    </location>
    <ligand>
        <name>3-methyl-2-oxobutanoate</name>
        <dbReference type="ChEBI" id="CHEBI:11851"/>
    </ligand>
</feature>
<feature type="binding site" evidence="1">
    <location>
        <position position="84"/>
    </location>
    <ligand>
        <name>Mg(2+)</name>
        <dbReference type="ChEBI" id="CHEBI:18420"/>
    </ligand>
</feature>
<feature type="binding site" evidence="1">
    <location>
        <position position="114"/>
    </location>
    <ligand>
        <name>3-methyl-2-oxobutanoate</name>
        <dbReference type="ChEBI" id="CHEBI:11851"/>
    </ligand>
</feature>
<feature type="binding site" evidence="1">
    <location>
        <position position="116"/>
    </location>
    <ligand>
        <name>Mg(2+)</name>
        <dbReference type="ChEBI" id="CHEBI:18420"/>
    </ligand>
</feature>
<reference key="1">
    <citation type="journal article" date="2005" name="Proc. Natl. Acad. Sci. U.S.A.">
        <title>The genome of Salinibacter ruber: convergence and gene exchange among hyperhalophilic bacteria and archaea.</title>
        <authorList>
            <person name="Mongodin E.F."/>
            <person name="Nelson K.E."/>
            <person name="Daugherty S."/>
            <person name="DeBoy R.T."/>
            <person name="Wister J."/>
            <person name="Khouri H."/>
            <person name="Weidman J."/>
            <person name="Walsh D.A."/>
            <person name="Papke R.T."/>
            <person name="Sanchez Perez G."/>
            <person name="Sharma A.K."/>
            <person name="Nesbo C.L."/>
            <person name="MacLeod D."/>
            <person name="Bapteste E."/>
            <person name="Doolittle W.F."/>
            <person name="Charlebois R.L."/>
            <person name="Legault B."/>
            <person name="Rodriguez-Valera F."/>
        </authorList>
    </citation>
    <scope>NUCLEOTIDE SEQUENCE [LARGE SCALE GENOMIC DNA]</scope>
    <source>
        <strain>DSM 13855 / CECT 5946 / M31</strain>
    </source>
</reference>
<organism>
    <name type="scientific">Salinibacter ruber (strain DSM 13855 / M31)</name>
    <dbReference type="NCBI Taxonomy" id="309807"/>
    <lineage>
        <taxon>Bacteria</taxon>
        <taxon>Pseudomonadati</taxon>
        <taxon>Rhodothermota</taxon>
        <taxon>Rhodothermia</taxon>
        <taxon>Rhodothermales</taxon>
        <taxon>Salinibacteraceae</taxon>
        <taxon>Salinibacter</taxon>
    </lineage>
</organism>
<accession>Q2S1H6</accession>
<evidence type="ECO:0000255" key="1">
    <source>
        <dbReference type="HAMAP-Rule" id="MF_00156"/>
    </source>
</evidence>